<name>CTNA1_BOVIN</name>
<evidence type="ECO:0000250" key="1"/>
<evidence type="ECO:0000250" key="2">
    <source>
        <dbReference type="UniProtKB" id="P26231"/>
    </source>
</evidence>
<evidence type="ECO:0000250" key="3">
    <source>
        <dbReference type="UniProtKB" id="P35221"/>
    </source>
</evidence>
<evidence type="ECO:0000250" key="4">
    <source>
        <dbReference type="UniProtKB" id="Q9PVF8"/>
    </source>
</evidence>
<evidence type="ECO:0000256" key="5">
    <source>
        <dbReference type="SAM" id="MobiDB-lite"/>
    </source>
</evidence>
<evidence type="ECO:0000305" key="6"/>
<protein>
    <recommendedName>
        <fullName evidence="3">Catenin alpha-1</fullName>
    </recommendedName>
</protein>
<keyword id="KW-0007">Acetylation</keyword>
<keyword id="KW-0130">Cell adhesion</keyword>
<keyword id="KW-0965">Cell junction</keyword>
<keyword id="KW-1003">Cell membrane</keyword>
<keyword id="KW-0963">Cytoplasm</keyword>
<keyword id="KW-0206">Cytoskeleton</keyword>
<keyword id="KW-1017">Isopeptide bond</keyword>
<keyword id="KW-0472">Membrane</keyword>
<keyword id="KW-0539">Nucleus</keyword>
<keyword id="KW-0597">Phosphoprotein</keyword>
<keyword id="KW-1185">Reference proteome</keyword>
<keyword id="KW-0832">Ubl conjugation</keyword>
<gene>
    <name evidence="3" type="primary">CTNNA1</name>
</gene>
<proteinExistence type="evidence at transcript level"/>
<dbReference type="EMBL" id="BC105180">
    <property type="protein sequence ID" value="AAI05181.1"/>
    <property type="molecule type" value="mRNA"/>
</dbReference>
<dbReference type="RefSeq" id="NP_001030443.1">
    <property type="nucleotide sequence ID" value="NM_001035366.1"/>
</dbReference>
<dbReference type="SMR" id="Q3MHM6"/>
<dbReference type="FunCoup" id="Q3MHM6">
    <property type="interactions" value="2701"/>
</dbReference>
<dbReference type="STRING" id="9913.ENSBTAP00000065154"/>
<dbReference type="PaxDb" id="9913-ENSBTAP00000018863"/>
<dbReference type="PeptideAtlas" id="Q3MHM6"/>
<dbReference type="GeneID" id="526848"/>
<dbReference type="KEGG" id="bta:526848"/>
<dbReference type="CTD" id="1495"/>
<dbReference type="eggNOG" id="KOG3681">
    <property type="taxonomic scope" value="Eukaryota"/>
</dbReference>
<dbReference type="InParanoid" id="Q3MHM6"/>
<dbReference type="OrthoDB" id="6376697at2759"/>
<dbReference type="Proteomes" id="UP000009136">
    <property type="component" value="Unplaced"/>
</dbReference>
<dbReference type="GO" id="GO:0015629">
    <property type="term" value="C:actin cytoskeleton"/>
    <property type="evidence" value="ECO:0007669"/>
    <property type="project" value="InterPro"/>
</dbReference>
<dbReference type="GO" id="GO:0005912">
    <property type="term" value="C:adherens junction"/>
    <property type="evidence" value="ECO:0000318"/>
    <property type="project" value="GO_Central"/>
</dbReference>
<dbReference type="GO" id="GO:0016342">
    <property type="term" value="C:catenin complex"/>
    <property type="evidence" value="ECO:0000318"/>
    <property type="project" value="GO_Central"/>
</dbReference>
<dbReference type="GO" id="GO:0005737">
    <property type="term" value="C:cytoplasm"/>
    <property type="evidence" value="ECO:0007669"/>
    <property type="project" value="UniProtKB-SubCell"/>
</dbReference>
<dbReference type="GO" id="GO:0005634">
    <property type="term" value="C:nucleus"/>
    <property type="evidence" value="ECO:0007669"/>
    <property type="project" value="UniProtKB-SubCell"/>
</dbReference>
<dbReference type="GO" id="GO:0051015">
    <property type="term" value="F:actin filament binding"/>
    <property type="evidence" value="ECO:0000318"/>
    <property type="project" value="GO_Central"/>
</dbReference>
<dbReference type="GO" id="GO:0008013">
    <property type="term" value="F:beta-catenin binding"/>
    <property type="evidence" value="ECO:0000318"/>
    <property type="project" value="GO_Central"/>
</dbReference>
<dbReference type="GO" id="GO:0045296">
    <property type="term" value="F:cadherin binding"/>
    <property type="evidence" value="ECO:0007669"/>
    <property type="project" value="InterPro"/>
</dbReference>
<dbReference type="GO" id="GO:0005198">
    <property type="term" value="F:structural molecule activity"/>
    <property type="evidence" value="ECO:0007669"/>
    <property type="project" value="InterPro"/>
</dbReference>
<dbReference type="GO" id="GO:0016477">
    <property type="term" value="P:cell migration"/>
    <property type="evidence" value="ECO:0000318"/>
    <property type="project" value="GO_Central"/>
</dbReference>
<dbReference type="GO" id="GO:0098609">
    <property type="term" value="P:cell-cell adhesion"/>
    <property type="evidence" value="ECO:0000318"/>
    <property type="project" value="GO_Central"/>
</dbReference>
<dbReference type="GO" id="GO:1900181">
    <property type="term" value="P:negative regulation of protein localization to nucleus"/>
    <property type="evidence" value="ECO:0000250"/>
    <property type="project" value="UniProtKB"/>
</dbReference>
<dbReference type="FunFam" id="1.20.120.230:FF:000006">
    <property type="entry name" value="Catenin alpha 1"/>
    <property type="match status" value="1"/>
</dbReference>
<dbReference type="FunFam" id="1.20.120.230:FF:000007">
    <property type="entry name" value="Catenin alpha 1"/>
    <property type="match status" value="1"/>
</dbReference>
<dbReference type="FunFam" id="1.20.120.230:FF:000008">
    <property type="entry name" value="Catenin alpha 1"/>
    <property type="match status" value="1"/>
</dbReference>
<dbReference type="FunFam" id="1.20.120.230:FF:000011">
    <property type="entry name" value="Catenin alpha 1"/>
    <property type="match status" value="1"/>
</dbReference>
<dbReference type="FunFam" id="1.20.120.230:FF:000012">
    <property type="entry name" value="Catenin alpha-2 isoform 1"/>
    <property type="match status" value="1"/>
</dbReference>
<dbReference type="Gene3D" id="6.10.250.2510">
    <property type="match status" value="1"/>
</dbReference>
<dbReference type="Gene3D" id="1.20.120.230">
    <property type="entry name" value="Alpha-catenin/vinculin-like"/>
    <property type="match status" value="5"/>
</dbReference>
<dbReference type="InterPro" id="IPR036723">
    <property type="entry name" value="Alpha-catenin/vinculin-like_sf"/>
</dbReference>
<dbReference type="InterPro" id="IPR001033">
    <property type="entry name" value="Alpha_catenin"/>
</dbReference>
<dbReference type="InterPro" id="IPR006077">
    <property type="entry name" value="Vinculin/catenin"/>
</dbReference>
<dbReference type="InterPro" id="IPR000633">
    <property type="entry name" value="Vinculin_CS"/>
</dbReference>
<dbReference type="PANTHER" id="PTHR18914">
    <property type="entry name" value="ALPHA CATENIN"/>
    <property type="match status" value="1"/>
</dbReference>
<dbReference type="PANTHER" id="PTHR18914:SF24">
    <property type="entry name" value="CATENIN ALPHA-1"/>
    <property type="match status" value="1"/>
</dbReference>
<dbReference type="Pfam" id="PF01044">
    <property type="entry name" value="Vinculin"/>
    <property type="match status" value="1"/>
</dbReference>
<dbReference type="PRINTS" id="PR00805">
    <property type="entry name" value="ALPHACATENIN"/>
</dbReference>
<dbReference type="SUPFAM" id="SSF47220">
    <property type="entry name" value="alpha-catenin/vinculin-like"/>
    <property type="match status" value="4"/>
</dbReference>
<dbReference type="PROSITE" id="PS00663">
    <property type="entry name" value="VINCULIN_1"/>
    <property type="match status" value="1"/>
</dbReference>
<organism>
    <name type="scientific">Bos taurus</name>
    <name type="common">Bovine</name>
    <dbReference type="NCBI Taxonomy" id="9913"/>
    <lineage>
        <taxon>Eukaryota</taxon>
        <taxon>Metazoa</taxon>
        <taxon>Chordata</taxon>
        <taxon>Craniata</taxon>
        <taxon>Vertebrata</taxon>
        <taxon>Euteleostomi</taxon>
        <taxon>Mammalia</taxon>
        <taxon>Eutheria</taxon>
        <taxon>Laurasiatheria</taxon>
        <taxon>Artiodactyla</taxon>
        <taxon>Ruminantia</taxon>
        <taxon>Pecora</taxon>
        <taxon>Bovidae</taxon>
        <taxon>Bovinae</taxon>
        <taxon>Bos</taxon>
    </lineage>
</organism>
<sequence length="906" mass="100133">MTAVHTGNINFKWDPKSLEIRTLAVERLLEPLVTQVTTLVNTNSKGPSNKKRGRSKKAHVLAASVEQATENFLEKGDKIAKESQFLKEELVAAVEDVRKQCDLMKSAAGEFADDPCSSVKRGNMVRAARALLSAVTRLLILADMADVYKLLVQLKLVEDGILKLRNAGTEQDLGIQYKALKPEVDKLNIMAAKRQQELKDVGHRDQMAAARGILQKNVPILYTASQACLQHPDVAAYKANRDLIYKQLQQAVTGISNAAQATASDDASQHPGAGGGELAYALNNFDKQIIVDPLSFSEERFRPSLEERLESIISGAALMADSSCTRDDRRERIVAECNAVRQALQDLLSEYMGNAGRKERSDALNSAIDKMTKKTRDLRRQLRKAVMDHVSDSFLETNVPLLVLVEAAKNGNEKEVKEYAQVFREHANKLIEVANLACSISNNEEGVKLVRMSASQLEALCPQVINAALALAAKPQSKLAQENMDLFKEQWEKQVRVLTDAVDDITSIDDFLAVSENHILEDVNKCVIALQEKDVDGLDRTAGAIRGRAARVIHVVTSEMDNYEPGVYTEKVLEATKLLSNTVMPRFTEQVEAAVEALSSDPAQPMDENEFIDASRLVYDGIRDIRKAVLMIRTPEELDDSDFETEDFDVRSRTSVQTEDDQLIAGQSARAIMAQLPQEQKAKIAEQVASFQEEKSKLDAEVSKWDDSGNDIIVLAKQMCMIMMEMTDFTRGKGPLKNTSDVISAAKKIAEAGSRMDKLGRTIADHCPDSACKQDLLAYLQRIALYCHQLNICSKVKAEVQNLGGELVVSGVDSAMSLIQAAKNLMNAVVQTVKASYVASTKYQKSQGMASLNLPAVSWKMKAPEKKPLVKREKQDETQTKIKRASQKKHVNPVQALSEFKAMDSI</sequence>
<feature type="initiator methionine" description="Removed" evidence="3">
    <location>
        <position position="1"/>
    </location>
</feature>
<feature type="chain" id="PRO_0000248837" description="Catenin alpha-1">
    <location>
        <begin position="2"/>
        <end position="906"/>
    </location>
</feature>
<feature type="region of interest" description="Involved in homodimerization" evidence="1">
    <location>
        <begin position="2"/>
        <end position="228"/>
    </location>
</feature>
<feature type="region of interest" description="Interaction with JUP and CTNNB1" evidence="1">
    <location>
        <begin position="97"/>
        <end position="148"/>
    </location>
</feature>
<feature type="region of interest" description="Interaction with alpha-actinin" evidence="1">
    <location>
        <begin position="325"/>
        <end position="394"/>
    </location>
</feature>
<feature type="region of interest" description="Disordered" evidence="5">
    <location>
        <begin position="864"/>
        <end position="894"/>
    </location>
</feature>
<feature type="compositionally biased region" description="Basic and acidic residues" evidence="5">
    <location>
        <begin position="864"/>
        <end position="880"/>
    </location>
</feature>
<feature type="compositionally biased region" description="Basic residues" evidence="5">
    <location>
        <begin position="881"/>
        <end position="891"/>
    </location>
</feature>
<feature type="modified residue" description="N-acetylthreonine" evidence="3">
    <location>
        <position position="2"/>
    </location>
</feature>
<feature type="modified residue" description="Phosphoserine" evidence="3">
    <location>
        <position position="264"/>
    </location>
</feature>
<feature type="modified residue" description="Phosphoserine" evidence="3">
    <location>
        <position position="268"/>
    </location>
</feature>
<feature type="modified residue" description="Phosphoserine" evidence="3">
    <location>
        <position position="295"/>
    </location>
</feature>
<feature type="modified residue" description="Phosphoserine" evidence="3">
    <location>
        <position position="297"/>
    </location>
</feature>
<feature type="modified residue" description="Phosphothreonine" evidence="3">
    <location>
        <position position="634"/>
    </location>
</feature>
<feature type="modified residue" description="Phosphoserine" evidence="3">
    <location>
        <position position="641"/>
    </location>
</feature>
<feature type="modified residue" description="Phosphothreonine" evidence="3">
    <location>
        <position position="645"/>
    </location>
</feature>
<feature type="modified residue" description="Phosphoserine" evidence="3">
    <location>
        <position position="652"/>
    </location>
</feature>
<feature type="modified residue" description="Phosphoserine" evidence="3">
    <location>
        <position position="655"/>
    </location>
</feature>
<feature type="modified residue" description="Phosphothreonine" evidence="3">
    <location>
        <position position="658"/>
    </location>
</feature>
<feature type="modified residue" description="Phosphoserine" evidence="3">
    <location>
        <position position="851"/>
    </location>
</feature>
<feature type="cross-link" description="Glycyl lysine isopeptide (Lys-Gly) (interchain with G-Cter in SUMO2)" evidence="3">
    <location>
        <position position="57"/>
    </location>
</feature>
<feature type="cross-link" description="Glycyl lysine isopeptide (Lys-Gly) (interchain with G-Cter in SUMO2)" evidence="3">
    <location>
        <position position="797"/>
    </location>
</feature>
<comment type="function">
    <text evidence="1 2">Associates with the cytoplasmic domain of a variety of cadherins. The association of catenins to cadherins produces a complex which is linked to the actin filament network, and which seems to be of primary importance for cadherins cell-adhesion properties. Can associate with both E- and N-cadherins. Originally believed to be a stable component of E-cadherin/catenin adhesion complexes and to mediate the linkage of cadherins to the actin cytoskeleton at adherens junctions. In contrast, cortical actin was found to be much more dynamic than E-cadherin/catenin complexes and CTNNA1 was shown not to bind to F-actin when assembled in the complex suggesting a different linkage between actin and adherens junctions components. The homodimeric form may regulate actin filament assembly and inhibit actin branching by competing with the Arp2/3 complex for binding to actin filaments. Involved in the regulation of WWTR1/TAZ, YAP1 and TGFB1-dependent SMAD2 and SMAD3 nuclear accumulation (By similarity). May play a crucial role in cell differentiation (By similarity).</text>
</comment>
<comment type="subunit">
    <text evidence="2 3">Monomer and homodimer; the monomer preferentially binds to CTNNB1 and the homodimer to actin (By similarity). Component of an cadherin:catenin adhesion complex composed of at least of CDH26, beta-catenin/CTNNB1, alpha-catenin/CTNNA1 and p120 catenin/CTNND1 (By similarity). Possible component of an E-cadherin/ catenin adhesion complex together with E-cadherin/CDH1 and beta-catenin/CTNNB1 or gamma-catenin/JUP; the complex is located to adherens junctions (By similarity). The stable association of CTNNA1 is controversial as CTNNA1 was shown not to bind to F-actin when assembled in the complex (By similarity). Alternatively, the CTNNA1-containing complex may be linked to F-actin by other proteins such as LIMA1 (By similarity). Binds AFDN and F-actin (By similarity). Interacts with ARHGAP21 (By similarity). Interacts with AJUBA (By similarity). Interacts with LIMA1 (By similarity). Interacts with vinculin/VCL (By similarity). Interacts with TJP2/ZO2 (via N-terminus) (By similarity). Interacts with TJP1/ZO1 (via N-terminus) (By similarity).</text>
</comment>
<comment type="subcellular location">
    <subcellularLocation>
        <location evidence="2">Cytoplasm</location>
        <location evidence="2">Cytoskeleton</location>
    </subcellularLocation>
    <subcellularLocation>
        <location evidence="3">Cell junction</location>
        <location evidence="3">Adherens junction</location>
    </subcellularLocation>
    <subcellularLocation>
        <location evidence="2">Cell membrane</location>
        <topology evidence="6">Peripheral membrane protein</topology>
        <orientation evidence="2">Cytoplasmic side</orientation>
    </subcellularLocation>
    <subcellularLocation>
        <location evidence="2">Cell junction</location>
    </subcellularLocation>
    <subcellularLocation>
        <location evidence="4">Cytoplasm</location>
    </subcellularLocation>
    <subcellularLocation>
        <location evidence="3">Nucleus</location>
    </subcellularLocation>
    <text evidence="2">Found only at cell-cell boundaries.</text>
</comment>
<comment type="PTM">
    <text evidence="3">Sumoylated.</text>
</comment>
<comment type="PTM">
    <text evidence="2">Phosphorylation seems to contribute to the strength of cell-cell adhesion rather than to the basic capacity for cell-cell adhesion.</text>
</comment>
<comment type="similarity">
    <text evidence="6">Belongs to the vinculin/alpha-catenin family.</text>
</comment>
<accession>Q3MHM6</accession>
<reference key="1">
    <citation type="submission" date="2005-09" db="EMBL/GenBank/DDBJ databases">
        <authorList>
            <consortium name="NIH - Mammalian Gene Collection (MGC) project"/>
        </authorList>
    </citation>
    <scope>NUCLEOTIDE SEQUENCE [LARGE SCALE MRNA]</scope>
    <source>
        <strain>Hereford</strain>
        <tissue>Fetal liver</tissue>
    </source>
</reference>